<name>RL31_ECOHS</name>
<keyword id="KW-0007">Acetylation</keyword>
<keyword id="KW-0479">Metal-binding</keyword>
<keyword id="KW-0687">Ribonucleoprotein</keyword>
<keyword id="KW-0689">Ribosomal protein</keyword>
<keyword id="KW-0694">RNA-binding</keyword>
<keyword id="KW-0699">rRNA-binding</keyword>
<keyword id="KW-0862">Zinc</keyword>
<protein>
    <recommendedName>
        <fullName evidence="1">Large ribosomal subunit protein bL31</fullName>
    </recommendedName>
    <alternativeName>
        <fullName evidence="2">50S ribosomal protein L31</fullName>
    </alternativeName>
</protein>
<sequence length="70" mass="7871">MKKDIHPKYEEITASCSCGNVMKIRSTVGHDLNLDVCSKCHPFFTGKQRDVATGGRVDRFNKRFNIPGSK</sequence>
<proteinExistence type="inferred from homology"/>
<comment type="function">
    <text evidence="1">Binds the 23S rRNA.</text>
</comment>
<comment type="cofactor">
    <cofactor evidence="1">
        <name>Zn(2+)</name>
        <dbReference type="ChEBI" id="CHEBI:29105"/>
    </cofactor>
    <text evidence="1">Binds 1 zinc ion per subunit.</text>
</comment>
<comment type="subunit">
    <text evidence="1">Part of the 50S ribosomal subunit.</text>
</comment>
<comment type="similarity">
    <text evidence="1">Belongs to the bacterial ribosomal protein bL31 family. Type A subfamily.</text>
</comment>
<organism>
    <name type="scientific">Escherichia coli O9:H4 (strain HS)</name>
    <dbReference type="NCBI Taxonomy" id="331112"/>
    <lineage>
        <taxon>Bacteria</taxon>
        <taxon>Pseudomonadati</taxon>
        <taxon>Pseudomonadota</taxon>
        <taxon>Gammaproteobacteria</taxon>
        <taxon>Enterobacterales</taxon>
        <taxon>Enterobacteriaceae</taxon>
        <taxon>Escherichia</taxon>
    </lineage>
</organism>
<evidence type="ECO:0000255" key="1">
    <source>
        <dbReference type="HAMAP-Rule" id="MF_00501"/>
    </source>
</evidence>
<evidence type="ECO:0000305" key="2"/>
<reference key="1">
    <citation type="journal article" date="2008" name="J. Bacteriol.">
        <title>The pangenome structure of Escherichia coli: comparative genomic analysis of E. coli commensal and pathogenic isolates.</title>
        <authorList>
            <person name="Rasko D.A."/>
            <person name="Rosovitz M.J."/>
            <person name="Myers G.S.A."/>
            <person name="Mongodin E.F."/>
            <person name="Fricke W.F."/>
            <person name="Gajer P."/>
            <person name="Crabtree J."/>
            <person name="Sebaihia M."/>
            <person name="Thomson N.R."/>
            <person name="Chaudhuri R."/>
            <person name="Henderson I.R."/>
            <person name="Sperandio V."/>
            <person name="Ravel J."/>
        </authorList>
    </citation>
    <scope>NUCLEOTIDE SEQUENCE [LARGE SCALE GENOMIC DNA]</scope>
    <source>
        <strain>HS</strain>
    </source>
</reference>
<gene>
    <name evidence="1" type="primary">rpmE</name>
    <name type="ordered locus">EcHS_A4168</name>
</gene>
<feature type="chain" id="PRO_1000126618" description="Large ribosomal subunit protein bL31">
    <location>
        <begin position="1"/>
        <end position="70"/>
    </location>
</feature>
<feature type="binding site" evidence="1">
    <location>
        <position position="16"/>
    </location>
    <ligand>
        <name>Zn(2+)</name>
        <dbReference type="ChEBI" id="CHEBI:29105"/>
    </ligand>
</feature>
<feature type="binding site" evidence="1">
    <location>
        <position position="18"/>
    </location>
    <ligand>
        <name>Zn(2+)</name>
        <dbReference type="ChEBI" id="CHEBI:29105"/>
    </ligand>
</feature>
<feature type="binding site" evidence="1">
    <location>
        <position position="37"/>
    </location>
    <ligand>
        <name>Zn(2+)</name>
        <dbReference type="ChEBI" id="CHEBI:29105"/>
    </ligand>
</feature>
<feature type="binding site" evidence="1">
    <location>
        <position position="40"/>
    </location>
    <ligand>
        <name>Zn(2+)</name>
        <dbReference type="ChEBI" id="CHEBI:29105"/>
    </ligand>
</feature>
<feature type="modified residue" description="N6-acetyllysine" evidence="1">
    <location>
        <position position="8"/>
    </location>
</feature>
<dbReference type="EMBL" id="CP000802">
    <property type="protein sequence ID" value="ABV08346.1"/>
    <property type="molecule type" value="Genomic_DNA"/>
</dbReference>
<dbReference type="RefSeq" id="WP_000710769.1">
    <property type="nucleotide sequence ID" value="NC_009800.1"/>
</dbReference>
<dbReference type="SMR" id="A8A742"/>
<dbReference type="GeneID" id="93777962"/>
<dbReference type="KEGG" id="ecx:EcHS_A4168"/>
<dbReference type="HOGENOM" id="CLU_114306_4_3_6"/>
<dbReference type="GO" id="GO:1990904">
    <property type="term" value="C:ribonucleoprotein complex"/>
    <property type="evidence" value="ECO:0007669"/>
    <property type="project" value="UniProtKB-KW"/>
</dbReference>
<dbReference type="GO" id="GO:0005840">
    <property type="term" value="C:ribosome"/>
    <property type="evidence" value="ECO:0007669"/>
    <property type="project" value="UniProtKB-KW"/>
</dbReference>
<dbReference type="GO" id="GO:0046872">
    <property type="term" value="F:metal ion binding"/>
    <property type="evidence" value="ECO:0007669"/>
    <property type="project" value="UniProtKB-KW"/>
</dbReference>
<dbReference type="GO" id="GO:0019843">
    <property type="term" value="F:rRNA binding"/>
    <property type="evidence" value="ECO:0007669"/>
    <property type="project" value="UniProtKB-KW"/>
</dbReference>
<dbReference type="GO" id="GO:0003735">
    <property type="term" value="F:structural constituent of ribosome"/>
    <property type="evidence" value="ECO:0007669"/>
    <property type="project" value="InterPro"/>
</dbReference>
<dbReference type="GO" id="GO:0006412">
    <property type="term" value="P:translation"/>
    <property type="evidence" value="ECO:0007669"/>
    <property type="project" value="UniProtKB-UniRule"/>
</dbReference>
<dbReference type="FunFam" id="4.10.830.30:FF:000001">
    <property type="entry name" value="50S ribosomal protein L31"/>
    <property type="match status" value="1"/>
</dbReference>
<dbReference type="Gene3D" id="4.10.830.30">
    <property type="entry name" value="Ribosomal protein L31"/>
    <property type="match status" value="1"/>
</dbReference>
<dbReference type="HAMAP" id="MF_00501">
    <property type="entry name" value="Ribosomal_bL31_1"/>
    <property type="match status" value="1"/>
</dbReference>
<dbReference type="InterPro" id="IPR034704">
    <property type="entry name" value="Ribosomal_bL28/bL31-like_sf"/>
</dbReference>
<dbReference type="InterPro" id="IPR002150">
    <property type="entry name" value="Ribosomal_bL31"/>
</dbReference>
<dbReference type="InterPro" id="IPR027491">
    <property type="entry name" value="Ribosomal_bL31_A"/>
</dbReference>
<dbReference type="InterPro" id="IPR042105">
    <property type="entry name" value="Ribosomal_bL31_sf"/>
</dbReference>
<dbReference type="NCBIfam" id="TIGR00105">
    <property type="entry name" value="L31"/>
    <property type="match status" value="1"/>
</dbReference>
<dbReference type="NCBIfam" id="NF000612">
    <property type="entry name" value="PRK00019.1"/>
    <property type="match status" value="1"/>
</dbReference>
<dbReference type="NCBIfam" id="NF001809">
    <property type="entry name" value="PRK00528.1"/>
    <property type="match status" value="1"/>
</dbReference>
<dbReference type="PANTHER" id="PTHR33280">
    <property type="entry name" value="50S RIBOSOMAL PROTEIN L31, CHLOROPLASTIC"/>
    <property type="match status" value="1"/>
</dbReference>
<dbReference type="PANTHER" id="PTHR33280:SF6">
    <property type="entry name" value="LARGE RIBOSOMAL SUBUNIT PROTEIN BL31A"/>
    <property type="match status" value="1"/>
</dbReference>
<dbReference type="Pfam" id="PF01197">
    <property type="entry name" value="Ribosomal_L31"/>
    <property type="match status" value="1"/>
</dbReference>
<dbReference type="PRINTS" id="PR01249">
    <property type="entry name" value="RIBOSOMALL31"/>
</dbReference>
<dbReference type="SUPFAM" id="SSF143800">
    <property type="entry name" value="L28p-like"/>
    <property type="match status" value="1"/>
</dbReference>
<dbReference type="PROSITE" id="PS01143">
    <property type="entry name" value="RIBOSOMAL_L31"/>
    <property type="match status" value="1"/>
</dbReference>
<accession>A8A742</accession>